<feature type="chain" id="PRO_1000201754" description="Adenylosuccinate synthetase">
    <location>
        <begin position="1"/>
        <end position="429"/>
    </location>
</feature>
<feature type="active site" description="Proton acceptor" evidence="1">
    <location>
        <position position="13"/>
    </location>
</feature>
<feature type="active site" description="Proton donor" evidence="1">
    <location>
        <position position="41"/>
    </location>
</feature>
<feature type="binding site" evidence="1">
    <location>
        <begin position="12"/>
        <end position="18"/>
    </location>
    <ligand>
        <name>GTP</name>
        <dbReference type="ChEBI" id="CHEBI:37565"/>
    </ligand>
</feature>
<feature type="binding site" description="in other chain" evidence="1">
    <location>
        <begin position="13"/>
        <end position="16"/>
    </location>
    <ligand>
        <name>IMP</name>
        <dbReference type="ChEBI" id="CHEBI:58053"/>
        <note>ligand shared between dimeric partners</note>
    </ligand>
</feature>
<feature type="binding site" evidence="1">
    <location>
        <position position="13"/>
    </location>
    <ligand>
        <name>Mg(2+)</name>
        <dbReference type="ChEBI" id="CHEBI:18420"/>
    </ligand>
</feature>
<feature type="binding site" description="in other chain" evidence="1">
    <location>
        <begin position="38"/>
        <end position="41"/>
    </location>
    <ligand>
        <name>IMP</name>
        <dbReference type="ChEBI" id="CHEBI:58053"/>
        <note>ligand shared between dimeric partners</note>
    </ligand>
</feature>
<feature type="binding site" evidence="1">
    <location>
        <begin position="40"/>
        <end position="42"/>
    </location>
    <ligand>
        <name>GTP</name>
        <dbReference type="ChEBI" id="CHEBI:37565"/>
    </ligand>
</feature>
<feature type="binding site" evidence="1">
    <location>
        <position position="40"/>
    </location>
    <ligand>
        <name>Mg(2+)</name>
        <dbReference type="ChEBI" id="CHEBI:18420"/>
    </ligand>
</feature>
<feature type="binding site" description="in other chain" evidence="1">
    <location>
        <position position="129"/>
    </location>
    <ligand>
        <name>IMP</name>
        <dbReference type="ChEBI" id="CHEBI:58053"/>
        <note>ligand shared between dimeric partners</note>
    </ligand>
</feature>
<feature type="binding site" evidence="1">
    <location>
        <position position="143"/>
    </location>
    <ligand>
        <name>IMP</name>
        <dbReference type="ChEBI" id="CHEBI:58053"/>
        <note>ligand shared between dimeric partners</note>
    </ligand>
</feature>
<feature type="binding site" description="in other chain" evidence="1">
    <location>
        <position position="224"/>
    </location>
    <ligand>
        <name>IMP</name>
        <dbReference type="ChEBI" id="CHEBI:58053"/>
        <note>ligand shared between dimeric partners</note>
    </ligand>
</feature>
<feature type="binding site" description="in other chain" evidence="1">
    <location>
        <position position="239"/>
    </location>
    <ligand>
        <name>IMP</name>
        <dbReference type="ChEBI" id="CHEBI:58053"/>
        <note>ligand shared between dimeric partners</note>
    </ligand>
</feature>
<feature type="binding site" evidence="1">
    <location>
        <begin position="299"/>
        <end position="305"/>
    </location>
    <ligand>
        <name>substrate</name>
    </ligand>
</feature>
<feature type="binding site" description="in other chain" evidence="1">
    <location>
        <position position="303"/>
    </location>
    <ligand>
        <name>IMP</name>
        <dbReference type="ChEBI" id="CHEBI:58053"/>
        <note>ligand shared between dimeric partners</note>
    </ligand>
</feature>
<feature type="binding site" evidence="1">
    <location>
        <position position="305"/>
    </location>
    <ligand>
        <name>GTP</name>
        <dbReference type="ChEBI" id="CHEBI:37565"/>
    </ligand>
</feature>
<feature type="binding site" evidence="1">
    <location>
        <begin position="331"/>
        <end position="333"/>
    </location>
    <ligand>
        <name>GTP</name>
        <dbReference type="ChEBI" id="CHEBI:37565"/>
    </ligand>
</feature>
<feature type="binding site" evidence="1">
    <location>
        <begin position="413"/>
        <end position="415"/>
    </location>
    <ligand>
        <name>GTP</name>
        <dbReference type="ChEBI" id="CHEBI:37565"/>
    </ligand>
</feature>
<reference key="1">
    <citation type="journal article" date="2009" name="Environ. Microbiol.">
        <title>Genome sequence of Desulfobacterium autotrophicum HRM2, a marine sulfate reducer oxidizing organic carbon completely to carbon dioxide.</title>
        <authorList>
            <person name="Strittmatter A.W."/>
            <person name="Liesegang H."/>
            <person name="Rabus R."/>
            <person name="Decker I."/>
            <person name="Amann J."/>
            <person name="Andres S."/>
            <person name="Henne A."/>
            <person name="Fricke W.F."/>
            <person name="Martinez-Arias R."/>
            <person name="Bartels D."/>
            <person name="Goesmann A."/>
            <person name="Krause L."/>
            <person name="Puehler A."/>
            <person name="Klenk H.P."/>
            <person name="Richter M."/>
            <person name="Schuler M."/>
            <person name="Gloeckner F.O."/>
            <person name="Meyerdierks A."/>
            <person name="Gottschalk G."/>
            <person name="Amann R."/>
        </authorList>
    </citation>
    <scope>NUCLEOTIDE SEQUENCE [LARGE SCALE GENOMIC DNA]</scope>
    <source>
        <strain>ATCC 43914 / DSM 3382 / VKM B-1955 / HRM2</strain>
    </source>
</reference>
<dbReference type="EC" id="6.3.4.4" evidence="1"/>
<dbReference type="EMBL" id="CP001087">
    <property type="protein sequence ID" value="ACN14848.1"/>
    <property type="molecule type" value="Genomic_DNA"/>
</dbReference>
<dbReference type="RefSeq" id="WP_015903634.1">
    <property type="nucleotide sequence ID" value="NC_012108.1"/>
</dbReference>
<dbReference type="SMR" id="C0QB49"/>
<dbReference type="STRING" id="177437.HRM2_17430"/>
<dbReference type="KEGG" id="dat:HRM2_17430"/>
<dbReference type="eggNOG" id="COG0104">
    <property type="taxonomic scope" value="Bacteria"/>
</dbReference>
<dbReference type="HOGENOM" id="CLU_029848_0_0_7"/>
<dbReference type="OrthoDB" id="9807553at2"/>
<dbReference type="UniPathway" id="UPA00075">
    <property type="reaction ID" value="UER00335"/>
</dbReference>
<dbReference type="Proteomes" id="UP000000442">
    <property type="component" value="Chromosome"/>
</dbReference>
<dbReference type="GO" id="GO:0005737">
    <property type="term" value="C:cytoplasm"/>
    <property type="evidence" value="ECO:0007669"/>
    <property type="project" value="UniProtKB-SubCell"/>
</dbReference>
<dbReference type="GO" id="GO:0004019">
    <property type="term" value="F:adenylosuccinate synthase activity"/>
    <property type="evidence" value="ECO:0007669"/>
    <property type="project" value="UniProtKB-UniRule"/>
</dbReference>
<dbReference type="GO" id="GO:0005525">
    <property type="term" value="F:GTP binding"/>
    <property type="evidence" value="ECO:0007669"/>
    <property type="project" value="UniProtKB-UniRule"/>
</dbReference>
<dbReference type="GO" id="GO:0000287">
    <property type="term" value="F:magnesium ion binding"/>
    <property type="evidence" value="ECO:0007669"/>
    <property type="project" value="UniProtKB-UniRule"/>
</dbReference>
<dbReference type="GO" id="GO:0044208">
    <property type="term" value="P:'de novo' AMP biosynthetic process"/>
    <property type="evidence" value="ECO:0007669"/>
    <property type="project" value="UniProtKB-UniRule"/>
</dbReference>
<dbReference type="GO" id="GO:0046040">
    <property type="term" value="P:IMP metabolic process"/>
    <property type="evidence" value="ECO:0007669"/>
    <property type="project" value="TreeGrafter"/>
</dbReference>
<dbReference type="CDD" id="cd03108">
    <property type="entry name" value="AdSS"/>
    <property type="match status" value="1"/>
</dbReference>
<dbReference type="FunFam" id="1.10.300.10:FF:000001">
    <property type="entry name" value="Adenylosuccinate synthetase"/>
    <property type="match status" value="1"/>
</dbReference>
<dbReference type="FunFam" id="3.90.170.10:FF:000001">
    <property type="entry name" value="Adenylosuccinate synthetase"/>
    <property type="match status" value="1"/>
</dbReference>
<dbReference type="Gene3D" id="3.40.440.10">
    <property type="entry name" value="Adenylosuccinate Synthetase, subunit A, domain 1"/>
    <property type="match status" value="1"/>
</dbReference>
<dbReference type="Gene3D" id="1.10.300.10">
    <property type="entry name" value="Adenylosuccinate Synthetase, subunit A, domain 2"/>
    <property type="match status" value="1"/>
</dbReference>
<dbReference type="Gene3D" id="3.90.170.10">
    <property type="entry name" value="Adenylosuccinate Synthetase, subunit A, domain 3"/>
    <property type="match status" value="1"/>
</dbReference>
<dbReference type="HAMAP" id="MF_00011">
    <property type="entry name" value="Adenylosucc_synth"/>
    <property type="match status" value="1"/>
</dbReference>
<dbReference type="InterPro" id="IPR018220">
    <property type="entry name" value="Adenylosuccin_syn_GTP-bd"/>
</dbReference>
<dbReference type="InterPro" id="IPR033128">
    <property type="entry name" value="Adenylosuccin_syn_Lys_AS"/>
</dbReference>
<dbReference type="InterPro" id="IPR042109">
    <property type="entry name" value="Adenylosuccinate_synth_dom1"/>
</dbReference>
<dbReference type="InterPro" id="IPR042110">
    <property type="entry name" value="Adenylosuccinate_synth_dom2"/>
</dbReference>
<dbReference type="InterPro" id="IPR042111">
    <property type="entry name" value="Adenylosuccinate_synth_dom3"/>
</dbReference>
<dbReference type="InterPro" id="IPR001114">
    <property type="entry name" value="Adenylosuccinate_synthetase"/>
</dbReference>
<dbReference type="InterPro" id="IPR027417">
    <property type="entry name" value="P-loop_NTPase"/>
</dbReference>
<dbReference type="NCBIfam" id="NF002223">
    <property type="entry name" value="PRK01117.1"/>
    <property type="match status" value="1"/>
</dbReference>
<dbReference type="NCBIfam" id="TIGR00184">
    <property type="entry name" value="purA"/>
    <property type="match status" value="1"/>
</dbReference>
<dbReference type="PANTHER" id="PTHR11846">
    <property type="entry name" value="ADENYLOSUCCINATE SYNTHETASE"/>
    <property type="match status" value="1"/>
</dbReference>
<dbReference type="PANTHER" id="PTHR11846:SF0">
    <property type="entry name" value="ADENYLOSUCCINATE SYNTHETASE"/>
    <property type="match status" value="1"/>
</dbReference>
<dbReference type="Pfam" id="PF00709">
    <property type="entry name" value="Adenylsucc_synt"/>
    <property type="match status" value="1"/>
</dbReference>
<dbReference type="SMART" id="SM00788">
    <property type="entry name" value="Adenylsucc_synt"/>
    <property type="match status" value="1"/>
</dbReference>
<dbReference type="SUPFAM" id="SSF52540">
    <property type="entry name" value="P-loop containing nucleoside triphosphate hydrolases"/>
    <property type="match status" value="1"/>
</dbReference>
<dbReference type="PROSITE" id="PS01266">
    <property type="entry name" value="ADENYLOSUCCIN_SYN_1"/>
    <property type="match status" value="1"/>
</dbReference>
<dbReference type="PROSITE" id="PS00513">
    <property type="entry name" value="ADENYLOSUCCIN_SYN_2"/>
    <property type="match status" value="1"/>
</dbReference>
<sequence length="429" mass="47143">MPNIVVVGTQWGDEGKGKIVDLLSGYADYVVRFQGGNNAGHTMVVDGNEIISHLVPSGIIQNKVCFIGNGVVVDPLVLLEEIDYLDSRGIDVSPERIKISDRAHMIMPYHKSIDQARELKKGDAKIGTTGRGIGPCYEDKATRRGIRFADLLDEALFAEKVTTIMEEKNFYLKNYFKTDTLDPGAVIKEFMGLRDRLLPYISDVSVALNKGMDQGKQVLFEGAQGTHLDIEHGTYPFVTSSSTVAANAACGSGVGPGKLDHVMGIVKAYTTRVGSGPFPTELFDEIGDRLQKKGAEFGATTGRRRRCGWLDMVMLKNAARLNGLTGLVITKLDVLDGLEEIKICTGYEHKGKVYDAFPPAIKTLEECTPVYESHPGWTENISKIKDYEDFPENTKKYLDRIKELSGVDIKIVSVGPGREATIVLDNLFC</sequence>
<organism>
    <name type="scientific">Desulforapulum autotrophicum (strain ATCC 43914 / DSM 3382 / VKM B-1955 / HRM2)</name>
    <name type="common">Desulfobacterium autotrophicum</name>
    <dbReference type="NCBI Taxonomy" id="177437"/>
    <lineage>
        <taxon>Bacteria</taxon>
        <taxon>Pseudomonadati</taxon>
        <taxon>Thermodesulfobacteriota</taxon>
        <taxon>Desulfobacteria</taxon>
        <taxon>Desulfobacterales</taxon>
        <taxon>Desulfobacteraceae</taxon>
        <taxon>Desulforapulum</taxon>
    </lineage>
</organism>
<protein>
    <recommendedName>
        <fullName evidence="1">Adenylosuccinate synthetase</fullName>
        <shortName evidence="1">AMPSase</shortName>
        <shortName evidence="1">AdSS</shortName>
        <ecNumber evidence="1">6.3.4.4</ecNumber>
    </recommendedName>
    <alternativeName>
        <fullName evidence="1">IMP--aspartate ligase</fullName>
    </alternativeName>
</protein>
<proteinExistence type="inferred from homology"/>
<comment type="function">
    <text evidence="1">Plays an important role in the de novo pathway of purine nucleotide biosynthesis. Catalyzes the first committed step in the biosynthesis of AMP from IMP.</text>
</comment>
<comment type="catalytic activity">
    <reaction evidence="1">
        <text>IMP + L-aspartate + GTP = N(6)-(1,2-dicarboxyethyl)-AMP + GDP + phosphate + 2 H(+)</text>
        <dbReference type="Rhea" id="RHEA:15753"/>
        <dbReference type="ChEBI" id="CHEBI:15378"/>
        <dbReference type="ChEBI" id="CHEBI:29991"/>
        <dbReference type="ChEBI" id="CHEBI:37565"/>
        <dbReference type="ChEBI" id="CHEBI:43474"/>
        <dbReference type="ChEBI" id="CHEBI:57567"/>
        <dbReference type="ChEBI" id="CHEBI:58053"/>
        <dbReference type="ChEBI" id="CHEBI:58189"/>
        <dbReference type="EC" id="6.3.4.4"/>
    </reaction>
</comment>
<comment type="cofactor">
    <cofactor evidence="1">
        <name>Mg(2+)</name>
        <dbReference type="ChEBI" id="CHEBI:18420"/>
    </cofactor>
    <text evidence="1">Binds 1 Mg(2+) ion per subunit.</text>
</comment>
<comment type="pathway">
    <text evidence="1">Purine metabolism; AMP biosynthesis via de novo pathway; AMP from IMP: step 1/2.</text>
</comment>
<comment type="subunit">
    <text evidence="1">Homodimer.</text>
</comment>
<comment type="subcellular location">
    <subcellularLocation>
        <location evidence="1">Cytoplasm</location>
    </subcellularLocation>
</comment>
<comment type="similarity">
    <text evidence="1">Belongs to the adenylosuccinate synthetase family.</text>
</comment>
<accession>C0QB49</accession>
<evidence type="ECO:0000255" key="1">
    <source>
        <dbReference type="HAMAP-Rule" id="MF_00011"/>
    </source>
</evidence>
<keyword id="KW-0963">Cytoplasm</keyword>
<keyword id="KW-0342">GTP-binding</keyword>
<keyword id="KW-0436">Ligase</keyword>
<keyword id="KW-0460">Magnesium</keyword>
<keyword id="KW-0479">Metal-binding</keyword>
<keyword id="KW-0547">Nucleotide-binding</keyword>
<keyword id="KW-0658">Purine biosynthesis</keyword>
<keyword id="KW-1185">Reference proteome</keyword>
<name>PURA_DESAH</name>
<gene>
    <name evidence="1" type="primary">purA</name>
    <name type="ordered locus">HRM2_17430</name>
</gene>